<protein>
    <recommendedName>
        <fullName evidence="1">3-phenylpropionate/cinnamic acid dioxygenase ferredoxin--NAD(+) reductase component</fullName>
        <ecNumber evidence="1">1.18.1.3</ecNumber>
    </recommendedName>
</protein>
<reference key="1">
    <citation type="journal article" date="2009" name="PLoS Genet.">
        <title>Organised genome dynamics in the Escherichia coli species results in highly diverse adaptive paths.</title>
        <authorList>
            <person name="Touchon M."/>
            <person name="Hoede C."/>
            <person name="Tenaillon O."/>
            <person name="Barbe V."/>
            <person name="Baeriswyl S."/>
            <person name="Bidet P."/>
            <person name="Bingen E."/>
            <person name="Bonacorsi S."/>
            <person name="Bouchier C."/>
            <person name="Bouvet O."/>
            <person name="Calteau A."/>
            <person name="Chiapello H."/>
            <person name="Clermont O."/>
            <person name="Cruveiller S."/>
            <person name="Danchin A."/>
            <person name="Diard M."/>
            <person name="Dossat C."/>
            <person name="Karoui M.E."/>
            <person name="Frapy E."/>
            <person name="Garry L."/>
            <person name="Ghigo J.M."/>
            <person name="Gilles A.M."/>
            <person name="Johnson J."/>
            <person name="Le Bouguenec C."/>
            <person name="Lescat M."/>
            <person name="Mangenot S."/>
            <person name="Martinez-Jehanne V."/>
            <person name="Matic I."/>
            <person name="Nassif X."/>
            <person name="Oztas S."/>
            <person name="Petit M.A."/>
            <person name="Pichon C."/>
            <person name="Rouy Z."/>
            <person name="Ruf C.S."/>
            <person name="Schneider D."/>
            <person name="Tourret J."/>
            <person name="Vacherie B."/>
            <person name="Vallenet D."/>
            <person name="Medigue C."/>
            <person name="Rocha E.P.C."/>
            <person name="Denamur E."/>
        </authorList>
    </citation>
    <scope>NUCLEOTIDE SEQUENCE [LARGE SCALE GENOMIC DNA]</scope>
    <source>
        <strain>55989 / EAEC</strain>
    </source>
</reference>
<name>HCAD_ECO55</name>
<gene>
    <name evidence="1" type="primary">hcaD</name>
    <name type="ordered locus">EC55989_2828</name>
</gene>
<proteinExistence type="inferred from homology"/>
<comment type="function">
    <text evidence="1">Part of the multicomponent 3-phenylpropionate dioxygenase, that converts 3-phenylpropionic acid (PP) and cinnamic acid (CI) into 3-phenylpropionate-dihydrodiol (PP-dihydrodiol) and cinnamic acid-dihydrodiol (CI-dihydrodiol), respectively.</text>
</comment>
<comment type="catalytic activity">
    <reaction evidence="1">
        <text>2 reduced [2Fe-2S]-[ferredoxin] + NAD(+) + H(+) = 2 oxidized [2Fe-2S]-[ferredoxin] + NADH</text>
        <dbReference type="Rhea" id="RHEA:16521"/>
        <dbReference type="Rhea" id="RHEA-COMP:10000"/>
        <dbReference type="Rhea" id="RHEA-COMP:10001"/>
        <dbReference type="ChEBI" id="CHEBI:15378"/>
        <dbReference type="ChEBI" id="CHEBI:33737"/>
        <dbReference type="ChEBI" id="CHEBI:33738"/>
        <dbReference type="ChEBI" id="CHEBI:57540"/>
        <dbReference type="ChEBI" id="CHEBI:57945"/>
        <dbReference type="EC" id="1.18.1.3"/>
    </reaction>
</comment>
<comment type="cofactor">
    <cofactor evidence="1">
        <name>FAD</name>
        <dbReference type="ChEBI" id="CHEBI:57692"/>
    </cofactor>
</comment>
<comment type="pathway">
    <text evidence="1">Aromatic compound metabolism; 3-phenylpropanoate degradation.</text>
</comment>
<comment type="subunit">
    <text evidence="1">This dioxygenase system consists of four proteins: the two subunits of the hydroxylase component (HcaE and HcaF), a ferredoxin (HcaC) and a ferredoxin reductase (HcaD).</text>
</comment>
<comment type="similarity">
    <text evidence="1">Belongs to the bacterial ring-hydroxylating dioxygenase ferredoxin reductase family.</text>
</comment>
<organism>
    <name type="scientific">Escherichia coli (strain 55989 / EAEC)</name>
    <dbReference type="NCBI Taxonomy" id="585055"/>
    <lineage>
        <taxon>Bacteria</taxon>
        <taxon>Pseudomonadati</taxon>
        <taxon>Pseudomonadota</taxon>
        <taxon>Gammaproteobacteria</taxon>
        <taxon>Enterobacterales</taxon>
        <taxon>Enterobacteriaceae</taxon>
        <taxon>Escherichia</taxon>
    </lineage>
</organism>
<dbReference type="EC" id="1.18.1.3" evidence="1"/>
<dbReference type="EMBL" id="CU928145">
    <property type="protein sequence ID" value="CAU98700.1"/>
    <property type="molecule type" value="Genomic_DNA"/>
</dbReference>
<dbReference type="RefSeq" id="WP_000660797.1">
    <property type="nucleotide sequence ID" value="NC_011748.1"/>
</dbReference>
<dbReference type="SMR" id="B7LDD4"/>
<dbReference type="GeneID" id="75206235"/>
<dbReference type="KEGG" id="eck:EC55989_2828"/>
<dbReference type="HOGENOM" id="CLU_003291_4_0_6"/>
<dbReference type="UniPathway" id="UPA00714"/>
<dbReference type="Proteomes" id="UP000000746">
    <property type="component" value="Chromosome"/>
</dbReference>
<dbReference type="GO" id="GO:0005737">
    <property type="term" value="C:cytoplasm"/>
    <property type="evidence" value="ECO:0007669"/>
    <property type="project" value="TreeGrafter"/>
</dbReference>
<dbReference type="GO" id="GO:0008695">
    <property type="term" value="F:3-phenylpropionate dioxygenase activity"/>
    <property type="evidence" value="ECO:0007669"/>
    <property type="project" value="UniProtKB-UniRule"/>
</dbReference>
<dbReference type="GO" id="GO:0008860">
    <property type="term" value="F:ferredoxin-NAD+ reductase activity"/>
    <property type="evidence" value="ECO:0007669"/>
    <property type="project" value="UniProtKB-EC"/>
</dbReference>
<dbReference type="GO" id="GO:0016651">
    <property type="term" value="F:oxidoreductase activity, acting on NAD(P)H"/>
    <property type="evidence" value="ECO:0007669"/>
    <property type="project" value="TreeGrafter"/>
</dbReference>
<dbReference type="GO" id="GO:0019380">
    <property type="term" value="P:3-phenylpropionate catabolic process"/>
    <property type="evidence" value="ECO:0007669"/>
    <property type="project" value="UniProtKB-UniRule"/>
</dbReference>
<dbReference type="FunFam" id="3.30.390.30:FF:000010">
    <property type="entry name" value="3-phenylpropionate/cinnamic acid dioxygenase ferredoxin--NAD(+) reductase component"/>
    <property type="match status" value="1"/>
</dbReference>
<dbReference type="FunFam" id="3.50.50.60:FF:000088">
    <property type="entry name" value="3-phenylpropionate/cinnamic acid dioxygenase ferredoxin--NAD(+) reductase component"/>
    <property type="match status" value="1"/>
</dbReference>
<dbReference type="Gene3D" id="3.30.390.30">
    <property type="match status" value="1"/>
</dbReference>
<dbReference type="Gene3D" id="3.50.50.60">
    <property type="entry name" value="FAD/NAD(P)-binding domain"/>
    <property type="match status" value="2"/>
</dbReference>
<dbReference type="HAMAP" id="MF_01651">
    <property type="entry name" value="HcaD"/>
    <property type="match status" value="1"/>
</dbReference>
<dbReference type="InterPro" id="IPR050446">
    <property type="entry name" value="FAD-oxidoreductase/Apoptosis"/>
</dbReference>
<dbReference type="InterPro" id="IPR036188">
    <property type="entry name" value="FAD/NAD-bd_sf"/>
</dbReference>
<dbReference type="InterPro" id="IPR023753">
    <property type="entry name" value="FAD/NAD-binding_dom"/>
</dbReference>
<dbReference type="InterPro" id="IPR016156">
    <property type="entry name" value="FAD/NAD-linked_Rdtase_dimer_sf"/>
</dbReference>
<dbReference type="InterPro" id="IPR023744">
    <property type="entry name" value="HcaD"/>
</dbReference>
<dbReference type="InterPro" id="IPR028202">
    <property type="entry name" value="Reductase_C"/>
</dbReference>
<dbReference type="InterPro" id="IPR053382">
    <property type="entry name" value="Ring-hydroxylating_dioxygenase"/>
</dbReference>
<dbReference type="NCBIfam" id="NF042949">
    <property type="entry name" value="3PPDioc_HcaD"/>
    <property type="match status" value="1"/>
</dbReference>
<dbReference type="NCBIfam" id="NF007286">
    <property type="entry name" value="PRK09754.1"/>
    <property type="match status" value="1"/>
</dbReference>
<dbReference type="PANTHER" id="PTHR43557">
    <property type="entry name" value="APOPTOSIS-INDUCING FACTOR 1"/>
    <property type="match status" value="1"/>
</dbReference>
<dbReference type="PANTHER" id="PTHR43557:SF2">
    <property type="entry name" value="RIESKE DOMAIN-CONTAINING PROTEIN-RELATED"/>
    <property type="match status" value="1"/>
</dbReference>
<dbReference type="Pfam" id="PF07992">
    <property type="entry name" value="Pyr_redox_2"/>
    <property type="match status" value="1"/>
</dbReference>
<dbReference type="Pfam" id="PF14759">
    <property type="entry name" value="Reductase_C"/>
    <property type="match status" value="1"/>
</dbReference>
<dbReference type="PRINTS" id="PR00368">
    <property type="entry name" value="FADPNR"/>
</dbReference>
<dbReference type="PRINTS" id="PR00411">
    <property type="entry name" value="PNDRDTASEI"/>
</dbReference>
<dbReference type="SUPFAM" id="SSF51905">
    <property type="entry name" value="FAD/NAD(P)-binding domain"/>
    <property type="match status" value="1"/>
</dbReference>
<dbReference type="SUPFAM" id="SSF55424">
    <property type="entry name" value="FAD/NAD-linked reductases, dimerisation (C-terminal) domain"/>
    <property type="match status" value="1"/>
</dbReference>
<feature type="chain" id="PRO_1000186981" description="3-phenylpropionate/cinnamic acid dioxygenase ferredoxin--NAD(+) reductase component">
    <location>
        <begin position="1"/>
        <end position="400"/>
    </location>
</feature>
<feature type="binding site" evidence="1">
    <location>
        <begin position="5"/>
        <end position="36"/>
    </location>
    <ligand>
        <name>FAD</name>
        <dbReference type="ChEBI" id="CHEBI:57692"/>
    </ligand>
</feature>
<feature type="binding site" evidence="1">
    <location>
        <begin position="146"/>
        <end position="174"/>
    </location>
    <ligand>
        <name>NAD(+)</name>
        <dbReference type="ChEBI" id="CHEBI:57540"/>
    </ligand>
</feature>
<evidence type="ECO:0000255" key="1">
    <source>
        <dbReference type="HAMAP-Rule" id="MF_01651"/>
    </source>
</evidence>
<sequence>MKEKTIIIVGGGQAAAMAAASLRQQGFTGELHLFSDERHLPYERPPLSKSMLLEDSPQLQQVLPANWWQENNVHLHSGVTIKTLGRDTRELVLTNGESWHWDQLFIATGAAARPLPLLDALGERCFTLRHAGDAARLREVLQPERSVVIVGAGTIGLELAASATQRRCKVTVIELAATVMGRNAPPPVQRYLLQRHQQAGVRILLNNAIEHVVDGEKVELTLQSGETLQADVVIYGIGISANEQLAREANLDTANGIVIDEACRTCDPAIFAGGDVAITRLDNGALHRCESWENANNQAQIAAAAMLGLPLPLLPPPWFWSDQYSDNLQFIGDMRGDDWLCRGNPETQKAIWFNLQNGVLIGAVTLNQGREIRPIRKWIQSGKTFDAKLLIDENIALKSL</sequence>
<keyword id="KW-0058">Aromatic hydrocarbons catabolism</keyword>
<keyword id="KW-0274">FAD</keyword>
<keyword id="KW-0285">Flavoprotein</keyword>
<keyword id="KW-0520">NAD</keyword>
<keyword id="KW-0560">Oxidoreductase</keyword>
<keyword id="KW-1185">Reference proteome</keyword>
<accession>B7LDD4</accession>